<name>YHBQ_ECOLU</name>
<reference key="1">
    <citation type="journal article" date="2009" name="PLoS Genet.">
        <title>Organised genome dynamics in the Escherichia coli species results in highly diverse adaptive paths.</title>
        <authorList>
            <person name="Touchon M."/>
            <person name="Hoede C."/>
            <person name="Tenaillon O."/>
            <person name="Barbe V."/>
            <person name="Baeriswyl S."/>
            <person name="Bidet P."/>
            <person name="Bingen E."/>
            <person name="Bonacorsi S."/>
            <person name="Bouchier C."/>
            <person name="Bouvet O."/>
            <person name="Calteau A."/>
            <person name="Chiapello H."/>
            <person name="Clermont O."/>
            <person name="Cruveiller S."/>
            <person name="Danchin A."/>
            <person name="Diard M."/>
            <person name="Dossat C."/>
            <person name="Karoui M.E."/>
            <person name="Frapy E."/>
            <person name="Garry L."/>
            <person name="Ghigo J.M."/>
            <person name="Gilles A.M."/>
            <person name="Johnson J."/>
            <person name="Le Bouguenec C."/>
            <person name="Lescat M."/>
            <person name="Mangenot S."/>
            <person name="Martinez-Jehanne V."/>
            <person name="Matic I."/>
            <person name="Nassif X."/>
            <person name="Oztas S."/>
            <person name="Petit M.A."/>
            <person name="Pichon C."/>
            <person name="Rouy Z."/>
            <person name="Ruf C.S."/>
            <person name="Schneider D."/>
            <person name="Tourret J."/>
            <person name="Vacherie B."/>
            <person name="Vallenet D."/>
            <person name="Medigue C."/>
            <person name="Rocha E.P.C."/>
            <person name="Denamur E."/>
        </authorList>
    </citation>
    <scope>NUCLEOTIDE SEQUENCE [LARGE SCALE GENOMIC DNA]</scope>
    <source>
        <strain>UMN026 / ExPEC</strain>
    </source>
</reference>
<evidence type="ECO:0000255" key="1">
    <source>
        <dbReference type="HAMAP-Rule" id="MF_01029"/>
    </source>
</evidence>
<dbReference type="EMBL" id="CU928163">
    <property type="protein sequence ID" value="CAR14789.1"/>
    <property type="molecule type" value="Genomic_DNA"/>
</dbReference>
<dbReference type="RefSeq" id="WP_000189316.1">
    <property type="nucleotide sequence ID" value="NC_011751.1"/>
</dbReference>
<dbReference type="RefSeq" id="YP_002414294.1">
    <property type="nucleotide sequence ID" value="NC_011751.1"/>
</dbReference>
<dbReference type="SMR" id="B7NDD9"/>
<dbReference type="STRING" id="585056.ECUMN_3635"/>
<dbReference type="KEGG" id="eum:ECUMN_3635"/>
<dbReference type="PATRIC" id="fig|585056.7.peg.3815"/>
<dbReference type="HOGENOM" id="CLU_135650_0_1_6"/>
<dbReference type="Proteomes" id="UP000007097">
    <property type="component" value="Chromosome"/>
</dbReference>
<dbReference type="CDD" id="cd10456">
    <property type="entry name" value="GIY-YIG_UPF0213"/>
    <property type="match status" value="1"/>
</dbReference>
<dbReference type="FunFam" id="3.40.1440.10:FF:000002">
    <property type="entry name" value="UPF0213 protein YhbQ"/>
    <property type="match status" value="1"/>
</dbReference>
<dbReference type="Gene3D" id="3.40.1440.10">
    <property type="entry name" value="GIY-YIG endonuclease"/>
    <property type="match status" value="1"/>
</dbReference>
<dbReference type="HAMAP" id="MF_01029">
    <property type="entry name" value="UPF0213"/>
    <property type="match status" value="1"/>
</dbReference>
<dbReference type="InterPro" id="IPR000305">
    <property type="entry name" value="GIY-YIG_endonuc"/>
</dbReference>
<dbReference type="InterPro" id="IPR035901">
    <property type="entry name" value="GIY-YIG_endonuc_sf"/>
</dbReference>
<dbReference type="InterPro" id="IPR050190">
    <property type="entry name" value="UPF0213_domain"/>
</dbReference>
<dbReference type="InterPro" id="IPR022992">
    <property type="entry name" value="UPF0213_GIY-YIG_endonuc"/>
</dbReference>
<dbReference type="PANTHER" id="PTHR34477">
    <property type="entry name" value="UPF0213 PROTEIN YHBQ"/>
    <property type="match status" value="1"/>
</dbReference>
<dbReference type="PANTHER" id="PTHR34477:SF1">
    <property type="entry name" value="UPF0213 PROTEIN YHBQ"/>
    <property type="match status" value="1"/>
</dbReference>
<dbReference type="Pfam" id="PF01541">
    <property type="entry name" value="GIY-YIG"/>
    <property type="match status" value="1"/>
</dbReference>
<dbReference type="SMART" id="SM00465">
    <property type="entry name" value="GIYc"/>
    <property type="match status" value="1"/>
</dbReference>
<dbReference type="SUPFAM" id="SSF82771">
    <property type="entry name" value="GIY-YIG endonuclease"/>
    <property type="match status" value="1"/>
</dbReference>
<dbReference type="PROSITE" id="PS50164">
    <property type="entry name" value="GIY_YIG"/>
    <property type="match status" value="1"/>
</dbReference>
<sequence>MTPWFLYLIRTADNKLYTGITTDVERRYQQHQSGKGAKALRGKGELTLAFSAPVGDRSLALRAEYRVKQLTKRQKERLVAEGAGFAELLSSLQTPKVKSD</sequence>
<protein>
    <recommendedName>
        <fullName evidence="1">UPF0213 protein YhbQ</fullName>
    </recommendedName>
</protein>
<comment type="similarity">
    <text evidence="1">Belongs to the UPF0213 family.</text>
</comment>
<accession>B7NDD9</accession>
<gene>
    <name evidence="1" type="primary">yhbQ</name>
    <name type="ordered locus">ECUMN_3635</name>
</gene>
<organism>
    <name type="scientific">Escherichia coli O17:K52:H18 (strain UMN026 / ExPEC)</name>
    <dbReference type="NCBI Taxonomy" id="585056"/>
    <lineage>
        <taxon>Bacteria</taxon>
        <taxon>Pseudomonadati</taxon>
        <taxon>Pseudomonadota</taxon>
        <taxon>Gammaproteobacteria</taxon>
        <taxon>Enterobacterales</taxon>
        <taxon>Enterobacteriaceae</taxon>
        <taxon>Escherichia</taxon>
    </lineage>
</organism>
<proteinExistence type="inferred from homology"/>
<feature type="chain" id="PRO_1000135747" description="UPF0213 protein YhbQ">
    <location>
        <begin position="1"/>
        <end position="100"/>
    </location>
</feature>
<feature type="domain" description="GIY-YIG" evidence="1">
    <location>
        <begin position="2"/>
        <end position="77"/>
    </location>
</feature>